<proteinExistence type="inferred from homology"/>
<protein>
    <recommendedName>
        <fullName evidence="1">DNA polymerase IV</fullName>
        <shortName evidence="1">Pol IV</shortName>
        <ecNumber evidence="1">2.7.7.7</ecNumber>
    </recommendedName>
</protein>
<gene>
    <name evidence="1" type="primary">dinB</name>
    <name type="ordered locus">EcE24377A_0265</name>
</gene>
<comment type="function">
    <text evidence="1">Poorly processive, error-prone DNA polymerase involved in untargeted mutagenesis. Copies undamaged DNA at stalled replication forks, which arise in vivo from mismatched or misaligned primer ends. These misaligned primers can be extended by PolIV. Exhibits no 3'-5' exonuclease (proofreading) activity. May be involved in translesional synthesis, in conjunction with the beta clamp from PolIII.</text>
</comment>
<comment type="catalytic activity">
    <reaction evidence="1">
        <text>DNA(n) + a 2'-deoxyribonucleoside 5'-triphosphate = DNA(n+1) + diphosphate</text>
        <dbReference type="Rhea" id="RHEA:22508"/>
        <dbReference type="Rhea" id="RHEA-COMP:17339"/>
        <dbReference type="Rhea" id="RHEA-COMP:17340"/>
        <dbReference type="ChEBI" id="CHEBI:33019"/>
        <dbReference type="ChEBI" id="CHEBI:61560"/>
        <dbReference type="ChEBI" id="CHEBI:173112"/>
        <dbReference type="EC" id="2.7.7.7"/>
    </reaction>
</comment>
<comment type="cofactor">
    <cofactor evidence="1">
        <name>Mg(2+)</name>
        <dbReference type="ChEBI" id="CHEBI:18420"/>
    </cofactor>
    <text evidence="1">Binds 2 magnesium ions per subunit.</text>
</comment>
<comment type="subunit">
    <text evidence="1">Monomer.</text>
</comment>
<comment type="subcellular location">
    <subcellularLocation>
        <location evidence="1">Cytoplasm</location>
    </subcellularLocation>
</comment>
<comment type="similarity">
    <text evidence="1">Belongs to the DNA polymerase type-Y family.</text>
</comment>
<accession>A7ZHZ2</accession>
<name>DPO4_ECO24</name>
<reference key="1">
    <citation type="journal article" date="2008" name="J. Bacteriol.">
        <title>The pangenome structure of Escherichia coli: comparative genomic analysis of E. coli commensal and pathogenic isolates.</title>
        <authorList>
            <person name="Rasko D.A."/>
            <person name="Rosovitz M.J."/>
            <person name="Myers G.S.A."/>
            <person name="Mongodin E.F."/>
            <person name="Fricke W.F."/>
            <person name="Gajer P."/>
            <person name="Crabtree J."/>
            <person name="Sebaihia M."/>
            <person name="Thomson N.R."/>
            <person name="Chaudhuri R."/>
            <person name="Henderson I.R."/>
            <person name="Sperandio V."/>
            <person name="Ravel J."/>
        </authorList>
    </citation>
    <scope>NUCLEOTIDE SEQUENCE [LARGE SCALE GENOMIC DNA]</scope>
    <source>
        <strain>E24377A / ETEC</strain>
    </source>
</reference>
<dbReference type="EC" id="2.7.7.7" evidence="1"/>
<dbReference type="EMBL" id="CP000800">
    <property type="protein sequence ID" value="ABV17967.1"/>
    <property type="molecule type" value="Genomic_DNA"/>
</dbReference>
<dbReference type="RefSeq" id="WP_001226183.1">
    <property type="nucleotide sequence ID" value="NC_009801.1"/>
</dbReference>
<dbReference type="SMR" id="A7ZHZ2"/>
<dbReference type="GeneID" id="75205734"/>
<dbReference type="KEGG" id="ecw:EcE24377A_0265"/>
<dbReference type="HOGENOM" id="CLU_012348_1_2_6"/>
<dbReference type="Proteomes" id="UP000001122">
    <property type="component" value="Chromosome"/>
</dbReference>
<dbReference type="GO" id="GO:0005829">
    <property type="term" value="C:cytosol"/>
    <property type="evidence" value="ECO:0007669"/>
    <property type="project" value="TreeGrafter"/>
</dbReference>
<dbReference type="GO" id="GO:0003684">
    <property type="term" value="F:damaged DNA binding"/>
    <property type="evidence" value="ECO:0007669"/>
    <property type="project" value="InterPro"/>
</dbReference>
<dbReference type="GO" id="GO:0003887">
    <property type="term" value="F:DNA-directed DNA polymerase activity"/>
    <property type="evidence" value="ECO:0007669"/>
    <property type="project" value="UniProtKB-UniRule"/>
</dbReference>
<dbReference type="GO" id="GO:0000287">
    <property type="term" value="F:magnesium ion binding"/>
    <property type="evidence" value="ECO:0007669"/>
    <property type="project" value="UniProtKB-UniRule"/>
</dbReference>
<dbReference type="GO" id="GO:0006261">
    <property type="term" value="P:DNA-templated DNA replication"/>
    <property type="evidence" value="ECO:0007669"/>
    <property type="project" value="UniProtKB-UniRule"/>
</dbReference>
<dbReference type="GO" id="GO:0042276">
    <property type="term" value="P:error-prone translesion synthesis"/>
    <property type="evidence" value="ECO:0007669"/>
    <property type="project" value="TreeGrafter"/>
</dbReference>
<dbReference type="GO" id="GO:0009432">
    <property type="term" value="P:SOS response"/>
    <property type="evidence" value="ECO:0007669"/>
    <property type="project" value="TreeGrafter"/>
</dbReference>
<dbReference type="CDD" id="cd03586">
    <property type="entry name" value="PolY_Pol_IV_kappa"/>
    <property type="match status" value="1"/>
</dbReference>
<dbReference type="FunFam" id="1.10.150.20:FF:000019">
    <property type="entry name" value="DNA polymerase IV"/>
    <property type="match status" value="1"/>
</dbReference>
<dbReference type="FunFam" id="3.30.1490.100:FF:000002">
    <property type="entry name" value="DNA polymerase IV"/>
    <property type="match status" value="1"/>
</dbReference>
<dbReference type="FunFam" id="3.30.70.270:FF:000002">
    <property type="entry name" value="DNA polymerase IV"/>
    <property type="match status" value="1"/>
</dbReference>
<dbReference type="FunFam" id="3.40.1170.60:FF:000001">
    <property type="entry name" value="DNA polymerase IV"/>
    <property type="match status" value="1"/>
</dbReference>
<dbReference type="Gene3D" id="3.30.70.270">
    <property type="match status" value="1"/>
</dbReference>
<dbReference type="Gene3D" id="3.40.1170.60">
    <property type="match status" value="1"/>
</dbReference>
<dbReference type="Gene3D" id="1.10.150.20">
    <property type="entry name" value="5' to 3' exonuclease, C-terminal subdomain"/>
    <property type="match status" value="1"/>
</dbReference>
<dbReference type="Gene3D" id="3.30.1490.100">
    <property type="entry name" value="DNA polymerase, Y-family, little finger domain"/>
    <property type="match status" value="1"/>
</dbReference>
<dbReference type="HAMAP" id="MF_01113">
    <property type="entry name" value="DNApol_IV"/>
    <property type="match status" value="1"/>
</dbReference>
<dbReference type="InterPro" id="IPR043502">
    <property type="entry name" value="DNA/RNA_pol_sf"/>
</dbReference>
<dbReference type="InterPro" id="IPR036775">
    <property type="entry name" value="DNA_pol_Y-fam_lit_finger_sf"/>
</dbReference>
<dbReference type="InterPro" id="IPR017961">
    <property type="entry name" value="DNA_pol_Y-fam_little_finger"/>
</dbReference>
<dbReference type="InterPro" id="IPR050116">
    <property type="entry name" value="DNA_polymerase-Y"/>
</dbReference>
<dbReference type="InterPro" id="IPR022880">
    <property type="entry name" value="DNApol_IV"/>
</dbReference>
<dbReference type="InterPro" id="IPR053848">
    <property type="entry name" value="IMS_HHH_1"/>
</dbReference>
<dbReference type="InterPro" id="IPR043128">
    <property type="entry name" value="Rev_trsase/Diguanyl_cyclase"/>
</dbReference>
<dbReference type="InterPro" id="IPR001126">
    <property type="entry name" value="UmuC"/>
</dbReference>
<dbReference type="NCBIfam" id="NF002677">
    <property type="entry name" value="PRK02406.1"/>
    <property type="match status" value="1"/>
</dbReference>
<dbReference type="PANTHER" id="PTHR11076:SF33">
    <property type="entry name" value="DNA POLYMERASE KAPPA"/>
    <property type="match status" value="1"/>
</dbReference>
<dbReference type="PANTHER" id="PTHR11076">
    <property type="entry name" value="DNA REPAIR POLYMERASE UMUC / TRANSFERASE FAMILY MEMBER"/>
    <property type="match status" value="1"/>
</dbReference>
<dbReference type="Pfam" id="PF00817">
    <property type="entry name" value="IMS"/>
    <property type="match status" value="1"/>
</dbReference>
<dbReference type="Pfam" id="PF11799">
    <property type="entry name" value="IMS_C"/>
    <property type="match status" value="1"/>
</dbReference>
<dbReference type="Pfam" id="PF21999">
    <property type="entry name" value="IMS_HHH_1"/>
    <property type="match status" value="1"/>
</dbReference>
<dbReference type="SUPFAM" id="SSF56672">
    <property type="entry name" value="DNA/RNA polymerases"/>
    <property type="match status" value="1"/>
</dbReference>
<dbReference type="SUPFAM" id="SSF100879">
    <property type="entry name" value="Lesion bypass DNA polymerase (Y-family), little finger domain"/>
    <property type="match status" value="1"/>
</dbReference>
<dbReference type="PROSITE" id="PS50173">
    <property type="entry name" value="UMUC"/>
    <property type="match status" value="1"/>
</dbReference>
<keyword id="KW-0963">Cytoplasm</keyword>
<keyword id="KW-0227">DNA damage</keyword>
<keyword id="KW-0234">DNA repair</keyword>
<keyword id="KW-0235">DNA replication</keyword>
<keyword id="KW-0238">DNA-binding</keyword>
<keyword id="KW-0239">DNA-directed DNA polymerase</keyword>
<keyword id="KW-0460">Magnesium</keyword>
<keyword id="KW-0479">Metal-binding</keyword>
<keyword id="KW-0515">Mutator protein</keyword>
<keyword id="KW-0548">Nucleotidyltransferase</keyword>
<keyword id="KW-1185">Reference proteome</keyword>
<keyword id="KW-0808">Transferase</keyword>
<sequence length="351" mass="39489">MRKIIHVDMDCFFAAVEMRDNPALRDIPIAIGGSRERRGVISTANYPARKFGVRSAMPTGMALKLCPHLTLLPGRFDAYKEASNHIREIFSRYTSRIEPLSLDEAYLDVTDSVHCHGSATLIAQEIRQTIFSELQLTASAGVAPVKFLAKIASDMNKPNGQFVITPAEVPAFLQTLPLAKIPGVGKVSAAKLEAMGLRTCGDVQKCDLVMLLKRFGKFGRILWERSQGIDERDVNSERLRKSVGVERTMAEDIHHWSECEAIIERLYPELERRLAKVKPDLLIARQGVKLKFDDFQQTTQEHVWPRLNKADLIATARKTWDERRGGRGVRLVGLHVTLLDPQMERQLVLGL</sequence>
<organism>
    <name type="scientific">Escherichia coli O139:H28 (strain E24377A / ETEC)</name>
    <dbReference type="NCBI Taxonomy" id="331111"/>
    <lineage>
        <taxon>Bacteria</taxon>
        <taxon>Pseudomonadati</taxon>
        <taxon>Pseudomonadota</taxon>
        <taxon>Gammaproteobacteria</taxon>
        <taxon>Enterobacterales</taxon>
        <taxon>Enterobacteriaceae</taxon>
        <taxon>Escherichia</taxon>
    </lineage>
</organism>
<evidence type="ECO:0000255" key="1">
    <source>
        <dbReference type="HAMAP-Rule" id="MF_01113"/>
    </source>
</evidence>
<feature type="chain" id="PRO_1000084888" description="DNA polymerase IV">
    <location>
        <begin position="1"/>
        <end position="351"/>
    </location>
</feature>
<feature type="domain" description="UmuC" evidence="1">
    <location>
        <begin position="4"/>
        <end position="185"/>
    </location>
</feature>
<feature type="active site" evidence="1">
    <location>
        <position position="104"/>
    </location>
</feature>
<feature type="binding site" evidence="1">
    <location>
        <position position="8"/>
    </location>
    <ligand>
        <name>Mg(2+)</name>
        <dbReference type="ChEBI" id="CHEBI:18420"/>
    </ligand>
</feature>
<feature type="binding site" evidence="1">
    <location>
        <position position="103"/>
    </location>
    <ligand>
        <name>Mg(2+)</name>
        <dbReference type="ChEBI" id="CHEBI:18420"/>
    </ligand>
</feature>
<feature type="site" description="Substrate discrimination" evidence="1">
    <location>
        <position position="13"/>
    </location>
</feature>